<reference key="1">
    <citation type="submission" date="2008-05" db="EMBL/GenBank/DDBJ databases">
        <title>Complete sequence of Chlorobium limicola DSM 245.</title>
        <authorList>
            <consortium name="US DOE Joint Genome Institute"/>
            <person name="Lucas S."/>
            <person name="Copeland A."/>
            <person name="Lapidus A."/>
            <person name="Glavina del Rio T."/>
            <person name="Dalin E."/>
            <person name="Tice H."/>
            <person name="Bruce D."/>
            <person name="Goodwin L."/>
            <person name="Pitluck S."/>
            <person name="Schmutz J."/>
            <person name="Larimer F."/>
            <person name="Land M."/>
            <person name="Hauser L."/>
            <person name="Kyrpides N."/>
            <person name="Ovchinnikova G."/>
            <person name="Zhao F."/>
            <person name="Li T."/>
            <person name="Liu Z."/>
            <person name="Overmann J."/>
            <person name="Bryant D.A."/>
            <person name="Richardson P."/>
        </authorList>
    </citation>
    <scope>NUCLEOTIDE SEQUENCE [LARGE SCALE GENOMIC DNA]</scope>
    <source>
        <strain>DSM 245 / NBRC 103803 / 6330</strain>
    </source>
</reference>
<keyword id="KW-0067">ATP-binding</keyword>
<keyword id="KW-0963">Cytoplasm</keyword>
<keyword id="KW-0418">Kinase</keyword>
<keyword id="KW-0545">Nucleotide biosynthesis</keyword>
<keyword id="KW-0547">Nucleotide-binding</keyword>
<keyword id="KW-0808">Transferase</keyword>
<feature type="chain" id="PRO_1000100542" description="Adenylate kinase">
    <location>
        <begin position="1"/>
        <end position="219"/>
    </location>
</feature>
<feature type="region of interest" description="NMP" evidence="1">
    <location>
        <begin position="30"/>
        <end position="59"/>
    </location>
</feature>
<feature type="region of interest" description="LID" evidence="1">
    <location>
        <begin position="122"/>
        <end position="159"/>
    </location>
</feature>
<feature type="binding site" evidence="1">
    <location>
        <begin position="10"/>
        <end position="15"/>
    </location>
    <ligand>
        <name>ATP</name>
        <dbReference type="ChEBI" id="CHEBI:30616"/>
    </ligand>
</feature>
<feature type="binding site" evidence="1">
    <location>
        <position position="31"/>
    </location>
    <ligand>
        <name>AMP</name>
        <dbReference type="ChEBI" id="CHEBI:456215"/>
    </ligand>
</feature>
<feature type="binding site" evidence="1">
    <location>
        <position position="36"/>
    </location>
    <ligand>
        <name>AMP</name>
        <dbReference type="ChEBI" id="CHEBI:456215"/>
    </ligand>
</feature>
<feature type="binding site" evidence="1">
    <location>
        <begin position="57"/>
        <end position="59"/>
    </location>
    <ligand>
        <name>AMP</name>
        <dbReference type="ChEBI" id="CHEBI:456215"/>
    </ligand>
</feature>
<feature type="binding site" evidence="1">
    <location>
        <begin position="85"/>
        <end position="88"/>
    </location>
    <ligand>
        <name>AMP</name>
        <dbReference type="ChEBI" id="CHEBI:456215"/>
    </ligand>
</feature>
<feature type="binding site" evidence="1">
    <location>
        <position position="92"/>
    </location>
    <ligand>
        <name>AMP</name>
        <dbReference type="ChEBI" id="CHEBI:456215"/>
    </ligand>
</feature>
<feature type="binding site" evidence="1">
    <location>
        <position position="123"/>
    </location>
    <ligand>
        <name>ATP</name>
        <dbReference type="ChEBI" id="CHEBI:30616"/>
    </ligand>
</feature>
<feature type="binding site" evidence="1">
    <location>
        <begin position="132"/>
        <end position="133"/>
    </location>
    <ligand>
        <name>ATP</name>
        <dbReference type="ChEBI" id="CHEBI:30616"/>
    </ligand>
</feature>
<feature type="binding site" evidence="1">
    <location>
        <position position="156"/>
    </location>
    <ligand>
        <name>AMP</name>
        <dbReference type="ChEBI" id="CHEBI:456215"/>
    </ligand>
</feature>
<feature type="binding site" evidence="1">
    <location>
        <position position="167"/>
    </location>
    <ligand>
        <name>AMP</name>
        <dbReference type="ChEBI" id="CHEBI:456215"/>
    </ligand>
</feature>
<feature type="binding site" evidence="1">
    <location>
        <position position="203"/>
    </location>
    <ligand>
        <name>ATP</name>
        <dbReference type="ChEBI" id="CHEBI:30616"/>
    </ligand>
</feature>
<evidence type="ECO:0000255" key="1">
    <source>
        <dbReference type="HAMAP-Rule" id="MF_00235"/>
    </source>
</evidence>
<name>KAD_CHLL2</name>
<comment type="function">
    <text evidence="1">Catalyzes the reversible transfer of the terminal phosphate group between ATP and AMP. Plays an important role in cellular energy homeostasis and in adenine nucleotide metabolism.</text>
</comment>
<comment type="catalytic activity">
    <reaction evidence="1">
        <text>AMP + ATP = 2 ADP</text>
        <dbReference type="Rhea" id="RHEA:12973"/>
        <dbReference type="ChEBI" id="CHEBI:30616"/>
        <dbReference type="ChEBI" id="CHEBI:456215"/>
        <dbReference type="ChEBI" id="CHEBI:456216"/>
        <dbReference type="EC" id="2.7.4.3"/>
    </reaction>
</comment>
<comment type="pathway">
    <text evidence="1">Purine metabolism; AMP biosynthesis via salvage pathway; AMP from ADP: step 1/1.</text>
</comment>
<comment type="subunit">
    <text evidence="1">Monomer.</text>
</comment>
<comment type="subcellular location">
    <subcellularLocation>
        <location evidence="1">Cytoplasm</location>
    </subcellularLocation>
</comment>
<comment type="domain">
    <text evidence="1">Consists of three domains, a large central CORE domain and two small peripheral domains, NMPbind and LID, which undergo movements during catalysis. The LID domain closes over the site of phosphoryl transfer upon ATP binding. Assembling and dissambling the active center during each catalytic cycle provides an effective means to prevent ATP hydrolysis.</text>
</comment>
<comment type="similarity">
    <text evidence="1">Belongs to the adenylate kinase family.</text>
</comment>
<accession>B3ED51</accession>
<organism>
    <name type="scientific">Chlorobium limicola (strain DSM 245 / NBRC 103803 / 6330)</name>
    <dbReference type="NCBI Taxonomy" id="290315"/>
    <lineage>
        <taxon>Bacteria</taxon>
        <taxon>Pseudomonadati</taxon>
        <taxon>Chlorobiota</taxon>
        <taxon>Chlorobiia</taxon>
        <taxon>Chlorobiales</taxon>
        <taxon>Chlorobiaceae</taxon>
        <taxon>Chlorobium/Pelodictyon group</taxon>
        <taxon>Chlorobium</taxon>
    </lineage>
</organism>
<proteinExistence type="inferred from homology"/>
<protein>
    <recommendedName>
        <fullName evidence="1">Adenylate kinase</fullName>
        <shortName evidence="1">AK</shortName>
        <ecNumber evidence="1">2.7.4.3</ecNumber>
    </recommendedName>
    <alternativeName>
        <fullName evidence="1">ATP-AMP transphosphorylase</fullName>
    </alternativeName>
    <alternativeName>
        <fullName evidence="1">ATP:AMP phosphotransferase</fullName>
    </alternativeName>
    <alternativeName>
        <fullName evidence="1">Adenylate monophosphate kinase</fullName>
    </alternativeName>
</protein>
<dbReference type="EC" id="2.7.4.3" evidence="1"/>
<dbReference type="EMBL" id="CP001097">
    <property type="protein sequence ID" value="ACD90476.1"/>
    <property type="molecule type" value="Genomic_DNA"/>
</dbReference>
<dbReference type="RefSeq" id="WP_012466353.1">
    <property type="nucleotide sequence ID" value="NC_010803.1"/>
</dbReference>
<dbReference type="SMR" id="B3ED51"/>
<dbReference type="STRING" id="290315.Clim_1416"/>
<dbReference type="KEGG" id="cli:Clim_1416"/>
<dbReference type="eggNOG" id="COG0563">
    <property type="taxonomic scope" value="Bacteria"/>
</dbReference>
<dbReference type="HOGENOM" id="CLU_032354_1_2_10"/>
<dbReference type="OrthoDB" id="9805030at2"/>
<dbReference type="UniPathway" id="UPA00588">
    <property type="reaction ID" value="UER00649"/>
</dbReference>
<dbReference type="Proteomes" id="UP000008841">
    <property type="component" value="Chromosome"/>
</dbReference>
<dbReference type="GO" id="GO:0005737">
    <property type="term" value="C:cytoplasm"/>
    <property type="evidence" value="ECO:0007669"/>
    <property type="project" value="UniProtKB-SubCell"/>
</dbReference>
<dbReference type="GO" id="GO:0004017">
    <property type="term" value="F:adenylate kinase activity"/>
    <property type="evidence" value="ECO:0007669"/>
    <property type="project" value="UniProtKB-UniRule"/>
</dbReference>
<dbReference type="GO" id="GO:0005524">
    <property type="term" value="F:ATP binding"/>
    <property type="evidence" value="ECO:0007669"/>
    <property type="project" value="UniProtKB-UniRule"/>
</dbReference>
<dbReference type="GO" id="GO:0044209">
    <property type="term" value="P:AMP salvage"/>
    <property type="evidence" value="ECO:0007669"/>
    <property type="project" value="UniProtKB-UniRule"/>
</dbReference>
<dbReference type="CDD" id="cd01428">
    <property type="entry name" value="ADK"/>
    <property type="match status" value="1"/>
</dbReference>
<dbReference type="FunFam" id="3.40.50.300:FF:000106">
    <property type="entry name" value="Adenylate kinase mitochondrial"/>
    <property type="match status" value="1"/>
</dbReference>
<dbReference type="Gene3D" id="3.40.50.300">
    <property type="entry name" value="P-loop containing nucleotide triphosphate hydrolases"/>
    <property type="match status" value="1"/>
</dbReference>
<dbReference type="HAMAP" id="MF_00235">
    <property type="entry name" value="Adenylate_kinase_Adk"/>
    <property type="match status" value="1"/>
</dbReference>
<dbReference type="InterPro" id="IPR006259">
    <property type="entry name" value="Adenyl_kin_sub"/>
</dbReference>
<dbReference type="InterPro" id="IPR000850">
    <property type="entry name" value="Adenylat/UMP-CMP_kin"/>
</dbReference>
<dbReference type="InterPro" id="IPR033690">
    <property type="entry name" value="Adenylat_kinase_CS"/>
</dbReference>
<dbReference type="InterPro" id="IPR007862">
    <property type="entry name" value="Adenylate_kinase_lid-dom"/>
</dbReference>
<dbReference type="InterPro" id="IPR027417">
    <property type="entry name" value="P-loop_NTPase"/>
</dbReference>
<dbReference type="NCBIfam" id="TIGR01351">
    <property type="entry name" value="adk"/>
    <property type="match status" value="1"/>
</dbReference>
<dbReference type="NCBIfam" id="NF001379">
    <property type="entry name" value="PRK00279.1-1"/>
    <property type="match status" value="1"/>
</dbReference>
<dbReference type="NCBIfam" id="NF001380">
    <property type="entry name" value="PRK00279.1-2"/>
    <property type="match status" value="1"/>
</dbReference>
<dbReference type="NCBIfam" id="NF001381">
    <property type="entry name" value="PRK00279.1-3"/>
    <property type="match status" value="1"/>
</dbReference>
<dbReference type="NCBIfam" id="NF011100">
    <property type="entry name" value="PRK14527.1"/>
    <property type="match status" value="1"/>
</dbReference>
<dbReference type="PANTHER" id="PTHR23359">
    <property type="entry name" value="NUCLEOTIDE KINASE"/>
    <property type="match status" value="1"/>
</dbReference>
<dbReference type="Pfam" id="PF00406">
    <property type="entry name" value="ADK"/>
    <property type="match status" value="1"/>
</dbReference>
<dbReference type="Pfam" id="PF05191">
    <property type="entry name" value="ADK_lid"/>
    <property type="match status" value="1"/>
</dbReference>
<dbReference type="PRINTS" id="PR00094">
    <property type="entry name" value="ADENYLTKNASE"/>
</dbReference>
<dbReference type="SUPFAM" id="SSF52540">
    <property type="entry name" value="P-loop containing nucleoside triphosphate hydrolases"/>
    <property type="match status" value="1"/>
</dbReference>
<dbReference type="PROSITE" id="PS00113">
    <property type="entry name" value="ADENYLATE_KINASE"/>
    <property type="match status" value="1"/>
</dbReference>
<sequence length="219" mass="23999">MRIILLGAPGAGKGTQAHYISKALDIPQISTGDMLRAAVKAETPVGLEAKKVMDAGQLVSDDIILALVKERLKNADCSNGCLFDGFPRTLAQAEALKKDGVGIDHVVEIDVADSEIITRMSGRRVHLSSGRTYHVLFNPPKQEGLDDETGEPLVQRADDEEDTVRKRLEIYHNQTAPLIEYYSGWASESIENAPRYRKIKGTGSVEEIRDRILGVLTSC</sequence>
<gene>
    <name evidence="1" type="primary">adk</name>
    <name type="ordered locus">Clim_1416</name>
</gene>